<organism>
    <name type="scientific">Ictalurus punctatus</name>
    <name type="common">Channel catfish</name>
    <name type="synonym">Silurus punctatus</name>
    <dbReference type="NCBI Taxonomy" id="7998"/>
    <lineage>
        <taxon>Eukaryota</taxon>
        <taxon>Metazoa</taxon>
        <taxon>Chordata</taxon>
        <taxon>Craniata</taxon>
        <taxon>Vertebrata</taxon>
        <taxon>Euteleostomi</taxon>
        <taxon>Actinopterygii</taxon>
        <taxon>Neopterygii</taxon>
        <taxon>Teleostei</taxon>
        <taxon>Ostariophysi</taxon>
        <taxon>Siluriformes</taxon>
        <taxon>Ictaluridae</taxon>
        <taxon>Ictalurus</taxon>
    </lineage>
</organism>
<name>RS3_ICTPU</name>
<accession>Q90YS2</accession>
<comment type="function">
    <text evidence="1">Component of the small ribosomal subunit. The ribosome is a large ribonucleoprotein complex responsible for the synthesis of proteins in the cell. Has endonuclease activity and plays a role in repair of damaged DNA. Also involved in other processes including regulation of transcription, translation of its cognate mRNA, spindle formation and chromosome movement during mitosis, and apoptosis.</text>
</comment>
<comment type="catalytic activity">
    <reaction evidence="1">
        <text>2'-deoxyribonucleotide-(2'-deoxyribose 5'-phosphate)-2'-deoxyribonucleotide-DNA = a 3'-end 2'-deoxyribonucleotide-(2,3-dehydro-2,3-deoxyribose 5'-phosphate)-DNA + a 5'-end 5'-phospho-2'-deoxyribonucleoside-DNA + H(+)</text>
        <dbReference type="Rhea" id="RHEA:66592"/>
        <dbReference type="Rhea" id="RHEA-COMP:13180"/>
        <dbReference type="Rhea" id="RHEA-COMP:16897"/>
        <dbReference type="Rhea" id="RHEA-COMP:17067"/>
        <dbReference type="ChEBI" id="CHEBI:15378"/>
        <dbReference type="ChEBI" id="CHEBI:136412"/>
        <dbReference type="ChEBI" id="CHEBI:157695"/>
        <dbReference type="ChEBI" id="CHEBI:167181"/>
        <dbReference type="EC" id="4.2.99.18"/>
    </reaction>
</comment>
<comment type="subcellular location">
    <subcellularLocation>
        <location evidence="1">Cytoplasm</location>
    </subcellularLocation>
    <subcellularLocation>
        <location evidence="1">Nucleus</location>
    </subcellularLocation>
    <subcellularLocation>
        <location evidence="1">Nucleus</location>
        <location evidence="1">Nucleolus</location>
    </subcellularLocation>
    <subcellularLocation>
        <location evidence="1">Mitochondrion inner membrane</location>
        <topology evidence="1">Peripheral membrane protein</topology>
    </subcellularLocation>
    <subcellularLocation>
        <location evidence="1">Cytoplasm</location>
        <location evidence="1">Cytoskeleton</location>
        <location evidence="1">Spindle</location>
    </subcellularLocation>
</comment>
<comment type="similarity">
    <text evidence="4">Belongs to the universal ribosomal protein uS3 family.</text>
</comment>
<proteinExistence type="evidence at transcript level"/>
<sequence>MAVQISKKRKFVSDGIFKAELNEFLTRELAEDGYSGVEVRVTPTRTEIIILATRTQNVLGEKGRRIRELTAVVQKRFGFPRGSVELYAEKVATRGLCAIAQAESLRYKLLGGLAVRRACYGVLRFIMESGAKGCEVVVSGKLRGQRAKSMKFVDGLMIHSGDPVNYYVDTAVRHVLLRQGVLGIKVKIMLPWDPSGKIGPKKPLPDHVSIVEPKEEILPTTPVSEQKGAKPEVPVMPQGAPVPTA</sequence>
<evidence type="ECO:0000250" key="1">
    <source>
        <dbReference type="UniProtKB" id="P23396"/>
    </source>
</evidence>
<evidence type="ECO:0000255" key="2">
    <source>
        <dbReference type="PROSITE-ProRule" id="PRU00118"/>
    </source>
</evidence>
<evidence type="ECO:0000256" key="3">
    <source>
        <dbReference type="SAM" id="MobiDB-lite"/>
    </source>
</evidence>
<evidence type="ECO:0000305" key="4"/>
<feature type="chain" id="PRO_0000130323" description="Small ribosomal subunit protein uS3">
    <location>
        <begin position="1"/>
        <end position="245"/>
    </location>
</feature>
<feature type="domain" description="KH type-2" evidence="2">
    <location>
        <begin position="21"/>
        <end position="92"/>
    </location>
</feature>
<feature type="region of interest" description="Disordered" evidence="3">
    <location>
        <begin position="215"/>
        <end position="245"/>
    </location>
</feature>
<protein>
    <recommendedName>
        <fullName evidence="4">Small ribosomal subunit protein uS3</fullName>
        <ecNumber evidence="1">4.2.99.18</ecNumber>
    </recommendedName>
    <alternativeName>
        <fullName>40S ribosomal protein S3</fullName>
    </alternativeName>
</protein>
<dbReference type="EC" id="4.2.99.18" evidence="1"/>
<dbReference type="EMBL" id="AF402810">
    <property type="protein sequence ID" value="AAK95184.1"/>
    <property type="molecule type" value="mRNA"/>
</dbReference>
<dbReference type="RefSeq" id="NP_001187068.1">
    <property type="nucleotide sequence ID" value="NM_001200139.1"/>
</dbReference>
<dbReference type="SMR" id="Q90YS2"/>
<dbReference type="STRING" id="7998.ENSIPUP00000008346"/>
<dbReference type="GeneID" id="100304557"/>
<dbReference type="KEGG" id="ipu:100304557"/>
<dbReference type="CTD" id="6188"/>
<dbReference type="OrthoDB" id="10248446at2759"/>
<dbReference type="Proteomes" id="UP000221080">
    <property type="component" value="Chromosome 4"/>
</dbReference>
<dbReference type="GO" id="GO:0022627">
    <property type="term" value="C:cytosolic small ribosomal subunit"/>
    <property type="evidence" value="ECO:0007669"/>
    <property type="project" value="TreeGrafter"/>
</dbReference>
<dbReference type="GO" id="GO:0005743">
    <property type="term" value="C:mitochondrial inner membrane"/>
    <property type="evidence" value="ECO:0007669"/>
    <property type="project" value="UniProtKB-SubCell"/>
</dbReference>
<dbReference type="GO" id="GO:0005730">
    <property type="term" value="C:nucleolus"/>
    <property type="evidence" value="ECO:0007669"/>
    <property type="project" value="UniProtKB-SubCell"/>
</dbReference>
<dbReference type="GO" id="GO:0005819">
    <property type="term" value="C:spindle"/>
    <property type="evidence" value="ECO:0007669"/>
    <property type="project" value="UniProtKB-SubCell"/>
</dbReference>
<dbReference type="GO" id="GO:0140078">
    <property type="term" value="F:class I DNA-(apurinic or apyrimidinic site) endonuclease activity"/>
    <property type="evidence" value="ECO:0007669"/>
    <property type="project" value="UniProtKB-EC"/>
</dbReference>
<dbReference type="GO" id="GO:0003677">
    <property type="term" value="F:DNA binding"/>
    <property type="evidence" value="ECO:0007669"/>
    <property type="project" value="UniProtKB-KW"/>
</dbReference>
<dbReference type="GO" id="GO:0003723">
    <property type="term" value="F:RNA binding"/>
    <property type="evidence" value="ECO:0007669"/>
    <property type="project" value="UniProtKB-KW"/>
</dbReference>
<dbReference type="GO" id="GO:0003735">
    <property type="term" value="F:structural constituent of ribosome"/>
    <property type="evidence" value="ECO:0007669"/>
    <property type="project" value="InterPro"/>
</dbReference>
<dbReference type="GO" id="GO:0006915">
    <property type="term" value="P:apoptotic process"/>
    <property type="evidence" value="ECO:0007669"/>
    <property type="project" value="UniProtKB-KW"/>
</dbReference>
<dbReference type="GO" id="GO:0051301">
    <property type="term" value="P:cell division"/>
    <property type="evidence" value="ECO:0007669"/>
    <property type="project" value="UniProtKB-KW"/>
</dbReference>
<dbReference type="GO" id="GO:0006281">
    <property type="term" value="P:DNA repair"/>
    <property type="evidence" value="ECO:0007669"/>
    <property type="project" value="UniProtKB-KW"/>
</dbReference>
<dbReference type="GO" id="GO:2001235">
    <property type="term" value="P:positive regulation of apoptotic signaling pathway"/>
    <property type="evidence" value="ECO:0007669"/>
    <property type="project" value="TreeGrafter"/>
</dbReference>
<dbReference type="GO" id="GO:0006417">
    <property type="term" value="P:regulation of translation"/>
    <property type="evidence" value="ECO:0007669"/>
    <property type="project" value="UniProtKB-KW"/>
</dbReference>
<dbReference type="GO" id="GO:0006412">
    <property type="term" value="P:translation"/>
    <property type="evidence" value="ECO:0007669"/>
    <property type="project" value="InterPro"/>
</dbReference>
<dbReference type="CDD" id="cd02413">
    <property type="entry name" value="KH-II_40S_S3"/>
    <property type="match status" value="1"/>
</dbReference>
<dbReference type="FunFam" id="3.30.1140.32:FF:000005">
    <property type="entry name" value="40S ribosomal protein S3"/>
    <property type="match status" value="1"/>
</dbReference>
<dbReference type="FunFam" id="3.30.300.20:FF:000006">
    <property type="entry name" value="40S ribosomal protein S3"/>
    <property type="match status" value="1"/>
</dbReference>
<dbReference type="Gene3D" id="3.30.300.20">
    <property type="match status" value="1"/>
</dbReference>
<dbReference type="Gene3D" id="3.30.1140.32">
    <property type="entry name" value="Ribosomal protein S3, C-terminal domain"/>
    <property type="match status" value="1"/>
</dbReference>
<dbReference type="InterPro" id="IPR015946">
    <property type="entry name" value="KH_dom-like_a/b"/>
</dbReference>
<dbReference type="InterPro" id="IPR004044">
    <property type="entry name" value="KH_dom_type_2"/>
</dbReference>
<dbReference type="InterPro" id="IPR009019">
    <property type="entry name" value="KH_sf_prok-type"/>
</dbReference>
<dbReference type="InterPro" id="IPR036419">
    <property type="entry name" value="Ribosomal_S3_C_sf"/>
</dbReference>
<dbReference type="InterPro" id="IPR001351">
    <property type="entry name" value="Ribosomal_uS3_C"/>
</dbReference>
<dbReference type="InterPro" id="IPR018280">
    <property type="entry name" value="Ribosomal_uS3_CS"/>
</dbReference>
<dbReference type="InterPro" id="IPR005703">
    <property type="entry name" value="Ribosomal_uS3_euk/arc"/>
</dbReference>
<dbReference type="NCBIfam" id="NF003219">
    <property type="entry name" value="PRK04191.1"/>
    <property type="match status" value="1"/>
</dbReference>
<dbReference type="NCBIfam" id="TIGR01008">
    <property type="entry name" value="uS3_euk_arch"/>
    <property type="match status" value="1"/>
</dbReference>
<dbReference type="PANTHER" id="PTHR11760">
    <property type="entry name" value="30S/40S RIBOSOMAL PROTEIN S3"/>
    <property type="match status" value="1"/>
</dbReference>
<dbReference type="PANTHER" id="PTHR11760:SF32">
    <property type="entry name" value="SMALL RIBOSOMAL SUBUNIT PROTEIN US3"/>
    <property type="match status" value="1"/>
</dbReference>
<dbReference type="Pfam" id="PF07650">
    <property type="entry name" value="KH_2"/>
    <property type="match status" value="1"/>
</dbReference>
<dbReference type="Pfam" id="PF00189">
    <property type="entry name" value="Ribosomal_S3_C"/>
    <property type="match status" value="1"/>
</dbReference>
<dbReference type="SUPFAM" id="SSF54814">
    <property type="entry name" value="Prokaryotic type KH domain (KH-domain type II)"/>
    <property type="match status" value="1"/>
</dbReference>
<dbReference type="SUPFAM" id="SSF54821">
    <property type="entry name" value="Ribosomal protein S3 C-terminal domain"/>
    <property type="match status" value="1"/>
</dbReference>
<dbReference type="PROSITE" id="PS50823">
    <property type="entry name" value="KH_TYPE_2"/>
    <property type="match status" value="1"/>
</dbReference>
<dbReference type="PROSITE" id="PS00548">
    <property type="entry name" value="RIBOSOMAL_S3"/>
    <property type="match status" value="1"/>
</dbReference>
<keyword id="KW-0053">Apoptosis</keyword>
<keyword id="KW-0131">Cell cycle</keyword>
<keyword id="KW-0132">Cell division</keyword>
<keyword id="KW-0963">Cytoplasm</keyword>
<keyword id="KW-0206">Cytoskeleton</keyword>
<keyword id="KW-0227">DNA damage</keyword>
<keyword id="KW-0234">DNA repair</keyword>
<keyword id="KW-0238">DNA-binding</keyword>
<keyword id="KW-0456">Lyase</keyword>
<keyword id="KW-0472">Membrane</keyword>
<keyword id="KW-0496">Mitochondrion</keyword>
<keyword id="KW-0999">Mitochondrion inner membrane</keyword>
<keyword id="KW-0498">Mitosis</keyword>
<keyword id="KW-0539">Nucleus</keyword>
<keyword id="KW-0687">Ribonucleoprotein</keyword>
<keyword id="KW-0689">Ribosomal protein</keyword>
<keyword id="KW-0694">RNA-binding</keyword>
<keyword id="KW-0804">Transcription</keyword>
<keyword id="KW-0805">Transcription regulation</keyword>
<keyword id="KW-0810">Translation regulation</keyword>
<reference key="1">
    <citation type="journal article" date="2002" name="Gene">
        <title>Translational machinery of channel catfish: I. A transcriptomic approach to the analysis of 32 40S ribosomal protein genes and their expression.</title>
        <authorList>
            <person name="Karsi A."/>
            <person name="Patterson A."/>
            <person name="Feng J."/>
            <person name="Liu Z.-J."/>
        </authorList>
    </citation>
    <scope>NUCLEOTIDE SEQUENCE [MRNA]</scope>
</reference>
<gene>
    <name type="primary">rps3</name>
</gene>